<feature type="signal peptide" evidence="2">
    <location>
        <begin position="1"/>
        <end position="26"/>
    </location>
</feature>
<feature type="chain" id="PRO_0000034609" description="Tumor necrosis factor receptor superfamily member EDAR">
    <location>
        <begin position="27"/>
        <end position="448"/>
    </location>
</feature>
<feature type="topological domain" description="Extracellular" evidence="2">
    <location>
        <begin position="27"/>
        <end position="187"/>
    </location>
</feature>
<feature type="transmembrane region" description="Helical" evidence="2">
    <location>
        <begin position="188"/>
        <end position="208"/>
    </location>
</feature>
<feature type="topological domain" description="Cytoplasmic" evidence="2">
    <location>
        <begin position="209"/>
        <end position="448"/>
    </location>
</feature>
<feature type="repeat" description="TNFR-Cys 1">
    <location>
        <begin position="30"/>
        <end position="71"/>
    </location>
</feature>
<feature type="repeat" description="TNFR-Cys 2">
    <location>
        <begin position="73"/>
        <end position="113"/>
    </location>
</feature>
<feature type="repeat" description="TNFR-Cys 3">
    <location>
        <begin position="115"/>
        <end position="150"/>
    </location>
</feature>
<feature type="domain" description="Death">
    <location>
        <begin position="358"/>
        <end position="431"/>
    </location>
</feature>
<feature type="region of interest" description="Disordered" evidence="3">
    <location>
        <begin position="220"/>
        <end position="297"/>
    </location>
</feature>
<feature type="compositionally biased region" description="Low complexity" evidence="3">
    <location>
        <begin position="220"/>
        <end position="229"/>
    </location>
</feature>
<feature type="compositionally biased region" description="Polar residues" evidence="3">
    <location>
        <begin position="258"/>
        <end position="283"/>
    </location>
</feature>
<feature type="glycosylation site" description="N-linked (GlcNAc...) asparagine" evidence="2">
    <location>
        <position position="38"/>
    </location>
</feature>
<feature type="disulfide bond" evidence="1">
    <location>
        <begin position="31"/>
        <end position="44"/>
    </location>
</feature>
<feature type="disulfide bond" evidence="1">
    <location>
        <begin position="47"/>
        <end position="60"/>
    </location>
</feature>
<feature type="disulfide bond" evidence="1">
    <location>
        <begin position="50"/>
        <end position="71"/>
    </location>
</feature>
<feature type="disulfide bond" evidence="1">
    <location>
        <begin position="74"/>
        <end position="87"/>
    </location>
</feature>
<feature type="disulfide bond" evidence="1">
    <location>
        <begin position="93"/>
        <end position="113"/>
    </location>
</feature>
<feature type="disulfide bond" evidence="2">
    <location>
        <begin position="135"/>
        <end position="148"/>
    </location>
</feature>
<feature type="sequence variant" description="In recessive downless Jackson." evidence="4">
    <original>E</original>
    <variation>K</variation>
    <location>
        <position position="379"/>
    </location>
</feature>
<proteinExistence type="evidence at protein level"/>
<dbReference type="EMBL" id="AF160502">
    <property type="protein sequence ID" value="AAD50425.1"/>
    <property type="molecule type" value="mRNA"/>
</dbReference>
<dbReference type="EMBL" id="AK004576">
    <property type="protein sequence ID" value="BAB23385.1"/>
    <property type="status" value="ALT_INIT"/>
    <property type="molecule type" value="mRNA"/>
</dbReference>
<dbReference type="CCDS" id="CCDS23862.1"/>
<dbReference type="RefSeq" id="NP_034230.1">
    <property type="nucleotide sequence ID" value="NM_010100.4"/>
</dbReference>
<dbReference type="SMR" id="Q9R187"/>
<dbReference type="FunCoup" id="Q9R187">
    <property type="interactions" value="728"/>
</dbReference>
<dbReference type="STRING" id="10090.ENSMUSP00000003312"/>
<dbReference type="GlyCosmos" id="Q9R187">
    <property type="glycosylation" value="1 site, No reported glycans"/>
</dbReference>
<dbReference type="GlyGen" id="Q9R187">
    <property type="glycosylation" value="1 site"/>
</dbReference>
<dbReference type="iPTMnet" id="Q9R187"/>
<dbReference type="PhosphoSitePlus" id="Q9R187"/>
<dbReference type="PaxDb" id="10090-ENSMUSP00000003312"/>
<dbReference type="ProteomicsDB" id="275437"/>
<dbReference type="ABCD" id="Q9R187">
    <property type="antibodies" value="14 sequenced antibodies"/>
</dbReference>
<dbReference type="Antibodypedia" id="33144">
    <property type="antibodies" value="375 antibodies from 33 providers"/>
</dbReference>
<dbReference type="DNASU" id="13608"/>
<dbReference type="Ensembl" id="ENSMUST00000003312.5">
    <property type="protein sequence ID" value="ENSMUSP00000003312.5"/>
    <property type="gene ID" value="ENSMUSG00000003227.5"/>
</dbReference>
<dbReference type="GeneID" id="13608"/>
<dbReference type="KEGG" id="mmu:13608"/>
<dbReference type="UCSC" id="uc007fdh.2">
    <property type="organism name" value="mouse"/>
</dbReference>
<dbReference type="AGR" id="MGI:1343498"/>
<dbReference type="CTD" id="10913"/>
<dbReference type="MGI" id="MGI:1343498">
    <property type="gene designation" value="Edar"/>
</dbReference>
<dbReference type="VEuPathDB" id="HostDB:ENSMUSG00000003227"/>
<dbReference type="eggNOG" id="ENOG502QRV5">
    <property type="taxonomic scope" value="Eukaryota"/>
</dbReference>
<dbReference type="GeneTree" id="ENSGT00940000153259"/>
<dbReference type="HOGENOM" id="CLU_039634_0_0_1"/>
<dbReference type="InParanoid" id="Q9R187"/>
<dbReference type="OMA" id="CGENEYH"/>
<dbReference type="OrthoDB" id="9903718at2759"/>
<dbReference type="PhylomeDB" id="Q9R187"/>
<dbReference type="TreeFam" id="TF331385"/>
<dbReference type="Reactome" id="R-MMU-5669034">
    <property type="pathway name" value="TNFs bind their physiological receptors"/>
</dbReference>
<dbReference type="BioGRID-ORCS" id="13608">
    <property type="hits" value="0 hits in 78 CRISPR screens"/>
</dbReference>
<dbReference type="ChiTaRS" id="Edar">
    <property type="organism name" value="mouse"/>
</dbReference>
<dbReference type="PRO" id="PR:Q9R187"/>
<dbReference type="Proteomes" id="UP000000589">
    <property type="component" value="Chromosome 10"/>
</dbReference>
<dbReference type="RNAct" id="Q9R187">
    <property type="molecule type" value="protein"/>
</dbReference>
<dbReference type="Bgee" id="ENSMUSG00000003227">
    <property type="expression patterns" value="Expressed in prostate bud and 75 other cell types or tissues"/>
</dbReference>
<dbReference type="GO" id="GO:0045177">
    <property type="term" value="C:apical part of cell"/>
    <property type="evidence" value="ECO:0000314"/>
    <property type="project" value="MGI"/>
</dbReference>
<dbReference type="GO" id="GO:0005886">
    <property type="term" value="C:plasma membrane"/>
    <property type="evidence" value="ECO:0000314"/>
    <property type="project" value="MGI"/>
</dbReference>
<dbReference type="GO" id="GO:0038023">
    <property type="term" value="F:signaling receptor activity"/>
    <property type="evidence" value="ECO:0000315"/>
    <property type="project" value="MGI"/>
</dbReference>
<dbReference type="GO" id="GO:0004888">
    <property type="term" value="F:transmembrane signaling receptor activity"/>
    <property type="evidence" value="ECO:0007669"/>
    <property type="project" value="Ensembl"/>
</dbReference>
<dbReference type="GO" id="GO:0006915">
    <property type="term" value="P:apoptotic process"/>
    <property type="evidence" value="ECO:0007669"/>
    <property type="project" value="UniProtKB-KW"/>
</dbReference>
<dbReference type="GO" id="GO:0030154">
    <property type="term" value="P:cell differentiation"/>
    <property type="evidence" value="ECO:0007669"/>
    <property type="project" value="UniProtKB-KW"/>
</dbReference>
<dbReference type="GO" id="GO:0019221">
    <property type="term" value="P:cytokine-mediated signaling pathway"/>
    <property type="evidence" value="ECO:0000315"/>
    <property type="project" value="MGI"/>
</dbReference>
<dbReference type="GO" id="GO:0001942">
    <property type="term" value="P:hair follicle development"/>
    <property type="evidence" value="ECO:0000315"/>
    <property type="project" value="MGI"/>
</dbReference>
<dbReference type="GO" id="GO:0042475">
    <property type="term" value="P:odontogenesis of dentin-containing tooth"/>
    <property type="evidence" value="ECO:0000315"/>
    <property type="project" value="MGI"/>
</dbReference>
<dbReference type="GO" id="GO:0043473">
    <property type="term" value="P:pigmentation"/>
    <property type="evidence" value="ECO:0000315"/>
    <property type="project" value="MGI"/>
</dbReference>
<dbReference type="GO" id="GO:0043123">
    <property type="term" value="P:positive regulation of canonical NF-kappaB signal transduction"/>
    <property type="evidence" value="ECO:0000315"/>
    <property type="project" value="MGI"/>
</dbReference>
<dbReference type="GO" id="GO:0010628">
    <property type="term" value="P:positive regulation of gene expression"/>
    <property type="evidence" value="ECO:0000314"/>
    <property type="project" value="MGI"/>
</dbReference>
<dbReference type="GO" id="GO:0046330">
    <property type="term" value="P:positive regulation of JNK cascade"/>
    <property type="evidence" value="ECO:0007669"/>
    <property type="project" value="InterPro"/>
</dbReference>
<dbReference type="GO" id="GO:1901224">
    <property type="term" value="P:positive regulation of non-canonical NF-kappaB signal transduction"/>
    <property type="evidence" value="ECO:0000314"/>
    <property type="project" value="MGI"/>
</dbReference>
<dbReference type="GO" id="GO:0060662">
    <property type="term" value="P:salivary gland cavitation"/>
    <property type="evidence" value="ECO:0000314"/>
    <property type="project" value="MGI"/>
</dbReference>
<dbReference type="CDD" id="cd13421">
    <property type="entry name" value="TNFRSF_EDAR"/>
    <property type="match status" value="1"/>
</dbReference>
<dbReference type="FunFam" id="1.10.533.10:FF:000006">
    <property type="entry name" value="Tumor necrosis factor receptor superfamily member EDAR"/>
    <property type="match status" value="1"/>
</dbReference>
<dbReference type="Gene3D" id="1.10.533.10">
    <property type="entry name" value="Death Domain, Fas"/>
    <property type="match status" value="1"/>
</dbReference>
<dbReference type="Gene3D" id="2.10.50.10">
    <property type="entry name" value="Tumor Necrosis Factor Receptor, subunit A, domain 2"/>
    <property type="match status" value="1"/>
</dbReference>
<dbReference type="InterPro" id="IPR011029">
    <property type="entry name" value="DEATH-like_dom_sf"/>
</dbReference>
<dbReference type="InterPro" id="IPR056762">
    <property type="entry name" value="Death_EDAR"/>
</dbReference>
<dbReference type="InterPro" id="IPR034052">
    <property type="entry name" value="EDAR_N"/>
</dbReference>
<dbReference type="InterPro" id="IPR047526">
    <property type="entry name" value="TNR19/27/EDAR"/>
</dbReference>
<dbReference type="PANTHER" id="PTHR12120">
    <property type="entry name" value="TNFR-CYS DOMAIN-CONTAINING PROTEIN"/>
    <property type="match status" value="1"/>
</dbReference>
<dbReference type="PANTHER" id="PTHR12120:SF9">
    <property type="entry name" value="TUMOR NECROSIS FACTOR RECEPTOR SUPERFAMILY MEMBER EDAR"/>
    <property type="match status" value="1"/>
</dbReference>
<dbReference type="Pfam" id="PF24979">
    <property type="entry name" value="Death_EDAR"/>
    <property type="match status" value="1"/>
</dbReference>
<dbReference type="SUPFAM" id="SSF47986">
    <property type="entry name" value="DEATH domain"/>
    <property type="match status" value="1"/>
</dbReference>
<protein>
    <recommendedName>
        <fullName>Tumor necrosis factor receptor superfamily member EDAR</fullName>
    </recommendedName>
    <alternativeName>
        <fullName>Anhidrotic ectodysplasin receptor 1</fullName>
    </alternativeName>
    <alternativeName>
        <fullName>Downless</fullName>
    </alternativeName>
    <alternativeName>
        <fullName>Ectodermal dysplasia receptor</fullName>
    </alternativeName>
    <alternativeName>
        <fullName>Ectodysplasin-A receptor</fullName>
    </alternativeName>
</protein>
<sequence>MAHVGDCKWMSWLPVLVVSLMCSAKAEDSNCGENEYHNQTTGLCQQCPPCRPGEEPYMSCGYGTKDDDYGCVPCPAEKFSKGGYQICRRHKDCEGFFRATVLTPGDMENDAECGPCLPGYYMLENRPRNIYGMVCYSCLLAPPNTKECVGATSGVSAHSSSTSGGSTLSPFQHAHKELSGQGHLATALIIAMSTIFIMAIAIVLIIMFYIMKTKPSAPACCSSPPGKSAEAPANTHEEKKEAPDSVVTFPENGEFQKLTATPTKTPKSENDASSENEQLLSRSVDSDEEPAPDKQGSPELCLLSLVHLAREKSVTSNKSAGIQSRRKKILDVYANVCGVVEGLSPTELPFDCLEKTSRMLSSTYNSEKAVVKTWRHLAESFGLKRDEIGGMTDGMQLFDRISTAGYSIPELLTKLVQIERLDAVESLCADILEWAGVVPPASPPPAAS</sequence>
<evidence type="ECO:0000250" key="1"/>
<evidence type="ECO:0000255" key="2"/>
<evidence type="ECO:0000256" key="3">
    <source>
        <dbReference type="SAM" id="MobiDB-lite"/>
    </source>
</evidence>
<evidence type="ECO:0000269" key="4">
    <source>
    </source>
</evidence>
<evidence type="ECO:0000269" key="5">
    <source>
    </source>
</evidence>
<evidence type="ECO:0000305" key="6"/>
<name>EDAR_MOUSE</name>
<comment type="function">
    <text evidence="1">Receptor for EDA isoform TAA, but not for EDA isoform TA-2 (By similarity). May mediate the activation of NF-kappa-B and JNK. May promote caspase-independent cell death.</text>
</comment>
<comment type="subunit">
    <text>Binds to EDARADD. Associates with TRAF1, TRAF2, TRAF3 and NIK.</text>
</comment>
<comment type="subcellular location">
    <subcellularLocation>
        <location evidence="6">Membrane</location>
        <topology evidence="6">Single-pass type I membrane protein</topology>
    </subcellularLocation>
</comment>
<comment type="developmental stage">
    <text>Transcripts are not detectable in the branchial arch epithelium before morphological tooth formation (10 dpc), but are highly expressed during the initiation of tooth development (11 dpc). Starting 12 dpc, expression is high and limited to the budding cells, and remains high in the fully developed enamel knot at 14 dpc, whereas all other dental cells were completely negative. During 15 dpc the enamel knot disappears largely through apoptosis, and no transcripts were detected in the tooth germs of newborns. In skin, uniformly distributed in the basal cells of the epidermis before follicle initiation. Expression becomes focally elevated before placodes become distinguishable. By 17 dpc transcripts are almost exclusively confined to maturing follicles and the recently initiated placodes.</text>
</comment>
<comment type="induction">
    <text evidence="5">By activin A in 12 dpc dental epithelium.</text>
</comment>
<comment type="disease">
    <text>Defects in Edar are a cause of the downless phenotype in mice (the equivalent of anhidrotic ectodermal dysplasia in humans). The disease is characterized by sparse hair (atrichosis or hypotrichosis), abnormal or missing teeth and the inability to sweat due to the absence of sweat glands.</text>
</comment>
<comment type="sequence caution" evidence="6">
    <conflict type="erroneous initiation">
        <sequence resource="EMBL-CDS" id="BAB23385"/>
    </conflict>
</comment>
<gene>
    <name type="primary">Edar</name>
    <name type="synonym">Dl</name>
</gene>
<accession>Q9R187</accession>
<accession>Q9DC43</accession>
<reference key="1">
    <citation type="journal article" date="1999" name="Nat. Genet.">
        <title>Involvement of a novel Tnf receptor homologue in hair follicle induction.</title>
        <authorList>
            <person name="Headon D.J."/>
            <person name="Overbeek P.A."/>
        </authorList>
    </citation>
    <scope>NUCLEOTIDE SEQUENCE [MRNA]</scope>
    <scope>VARIANT LYS-379</scope>
    <source>
        <tissue>Embryonic foot</tissue>
        <tissue>Embryonic skin</tissue>
        <tissue>Embryonic tail</tissue>
    </source>
</reference>
<reference key="2">
    <citation type="journal article" date="2005" name="Science">
        <title>The transcriptional landscape of the mammalian genome.</title>
        <authorList>
            <person name="Carninci P."/>
            <person name="Kasukawa T."/>
            <person name="Katayama S."/>
            <person name="Gough J."/>
            <person name="Frith M.C."/>
            <person name="Maeda N."/>
            <person name="Oyama R."/>
            <person name="Ravasi T."/>
            <person name="Lenhard B."/>
            <person name="Wells C."/>
            <person name="Kodzius R."/>
            <person name="Shimokawa K."/>
            <person name="Bajic V.B."/>
            <person name="Brenner S.E."/>
            <person name="Batalov S."/>
            <person name="Forrest A.R."/>
            <person name="Zavolan M."/>
            <person name="Davis M.J."/>
            <person name="Wilming L.G."/>
            <person name="Aidinis V."/>
            <person name="Allen J.E."/>
            <person name="Ambesi-Impiombato A."/>
            <person name="Apweiler R."/>
            <person name="Aturaliya R.N."/>
            <person name="Bailey T.L."/>
            <person name="Bansal M."/>
            <person name="Baxter L."/>
            <person name="Beisel K.W."/>
            <person name="Bersano T."/>
            <person name="Bono H."/>
            <person name="Chalk A.M."/>
            <person name="Chiu K.P."/>
            <person name="Choudhary V."/>
            <person name="Christoffels A."/>
            <person name="Clutterbuck D.R."/>
            <person name="Crowe M.L."/>
            <person name="Dalla E."/>
            <person name="Dalrymple B.P."/>
            <person name="de Bono B."/>
            <person name="Della Gatta G."/>
            <person name="di Bernardo D."/>
            <person name="Down T."/>
            <person name="Engstrom P."/>
            <person name="Fagiolini M."/>
            <person name="Faulkner G."/>
            <person name="Fletcher C.F."/>
            <person name="Fukushima T."/>
            <person name="Furuno M."/>
            <person name="Futaki S."/>
            <person name="Gariboldi M."/>
            <person name="Georgii-Hemming P."/>
            <person name="Gingeras T.R."/>
            <person name="Gojobori T."/>
            <person name="Green R.E."/>
            <person name="Gustincich S."/>
            <person name="Harbers M."/>
            <person name="Hayashi Y."/>
            <person name="Hensch T.K."/>
            <person name="Hirokawa N."/>
            <person name="Hill D."/>
            <person name="Huminiecki L."/>
            <person name="Iacono M."/>
            <person name="Ikeo K."/>
            <person name="Iwama A."/>
            <person name="Ishikawa T."/>
            <person name="Jakt M."/>
            <person name="Kanapin A."/>
            <person name="Katoh M."/>
            <person name="Kawasawa Y."/>
            <person name="Kelso J."/>
            <person name="Kitamura H."/>
            <person name="Kitano H."/>
            <person name="Kollias G."/>
            <person name="Krishnan S.P."/>
            <person name="Kruger A."/>
            <person name="Kummerfeld S.K."/>
            <person name="Kurochkin I.V."/>
            <person name="Lareau L.F."/>
            <person name="Lazarevic D."/>
            <person name="Lipovich L."/>
            <person name="Liu J."/>
            <person name="Liuni S."/>
            <person name="McWilliam S."/>
            <person name="Madan Babu M."/>
            <person name="Madera M."/>
            <person name="Marchionni L."/>
            <person name="Matsuda H."/>
            <person name="Matsuzawa S."/>
            <person name="Miki H."/>
            <person name="Mignone F."/>
            <person name="Miyake S."/>
            <person name="Morris K."/>
            <person name="Mottagui-Tabar S."/>
            <person name="Mulder N."/>
            <person name="Nakano N."/>
            <person name="Nakauchi H."/>
            <person name="Ng P."/>
            <person name="Nilsson R."/>
            <person name="Nishiguchi S."/>
            <person name="Nishikawa S."/>
            <person name="Nori F."/>
            <person name="Ohara O."/>
            <person name="Okazaki Y."/>
            <person name="Orlando V."/>
            <person name="Pang K.C."/>
            <person name="Pavan W.J."/>
            <person name="Pavesi G."/>
            <person name="Pesole G."/>
            <person name="Petrovsky N."/>
            <person name="Piazza S."/>
            <person name="Reed J."/>
            <person name="Reid J.F."/>
            <person name="Ring B.Z."/>
            <person name="Ringwald M."/>
            <person name="Rost B."/>
            <person name="Ruan Y."/>
            <person name="Salzberg S.L."/>
            <person name="Sandelin A."/>
            <person name="Schneider C."/>
            <person name="Schoenbach C."/>
            <person name="Sekiguchi K."/>
            <person name="Semple C.A."/>
            <person name="Seno S."/>
            <person name="Sessa L."/>
            <person name="Sheng Y."/>
            <person name="Shibata Y."/>
            <person name="Shimada H."/>
            <person name="Shimada K."/>
            <person name="Silva D."/>
            <person name="Sinclair B."/>
            <person name="Sperling S."/>
            <person name="Stupka E."/>
            <person name="Sugiura K."/>
            <person name="Sultana R."/>
            <person name="Takenaka Y."/>
            <person name="Taki K."/>
            <person name="Tammoja K."/>
            <person name="Tan S.L."/>
            <person name="Tang S."/>
            <person name="Taylor M.S."/>
            <person name="Tegner J."/>
            <person name="Teichmann S.A."/>
            <person name="Ueda H.R."/>
            <person name="van Nimwegen E."/>
            <person name="Verardo R."/>
            <person name="Wei C.L."/>
            <person name="Yagi K."/>
            <person name="Yamanishi H."/>
            <person name="Zabarovsky E."/>
            <person name="Zhu S."/>
            <person name="Zimmer A."/>
            <person name="Hide W."/>
            <person name="Bult C."/>
            <person name="Grimmond S.M."/>
            <person name="Teasdale R.D."/>
            <person name="Liu E.T."/>
            <person name="Brusic V."/>
            <person name="Quackenbush J."/>
            <person name="Wahlestedt C."/>
            <person name="Mattick J.S."/>
            <person name="Hume D.A."/>
            <person name="Kai C."/>
            <person name="Sasaki D."/>
            <person name="Tomaru Y."/>
            <person name="Fukuda S."/>
            <person name="Kanamori-Katayama M."/>
            <person name="Suzuki M."/>
            <person name="Aoki J."/>
            <person name="Arakawa T."/>
            <person name="Iida J."/>
            <person name="Imamura K."/>
            <person name="Itoh M."/>
            <person name="Kato T."/>
            <person name="Kawaji H."/>
            <person name="Kawagashira N."/>
            <person name="Kawashima T."/>
            <person name="Kojima M."/>
            <person name="Kondo S."/>
            <person name="Konno H."/>
            <person name="Nakano K."/>
            <person name="Ninomiya N."/>
            <person name="Nishio T."/>
            <person name="Okada M."/>
            <person name="Plessy C."/>
            <person name="Shibata K."/>
            <person name="Shiraki T."/>
            <person name="Suzuki S."/>
            <person name="Tagami M."/>
            <person name="Waki K."/>
            <person name="Watahiki A."/>
            <person name="Okamura-Oho Y."/>
            <person name="Suzuki H."/>
            <person name="Kawai J."/>
            <person name="Hayashizaki Y."/>
        </authorList>
    </citation>
    <scope>NUCLEOTIDE SEQUENCE [LARGE SCALE MRNA] OF 205-448</scope>
    <source>
        <strain>C57BL/6J</strain>
        <tissue>Lung</tissue>
    </source>
</reference>
<reference key="3">
    <citation type="journal article" date="2001" name="Dev. Biol.">
        <title>TNF signaling via the ligand-receptor pair ectodysplasin and edar controls the function of epithelial signaling centers and is regulated by Wnt and activin during tooth organogenesis.</title>
        <authorList>
            <person name="Laurikkala J."/>
            <person name="Mikkola M.L."/>
            <person name="Mustonen T."/>
            <person name="Aaberg T."/>
            <person name="Koppinen P."/>
            <person name="Pispa J."/>
            <person name="Nieminen P."/>
            <person name="Galceran J."/>
            <person name="Grosschedl R."/>
            <person name="Thesleff I."/>
        </authorList>
    </citation>
    <scope>INDUCTION BY ACTIVIN A</scope>
</reference>
<keyword id="KW-0053">Apoptosis</keyword>
<keyword id="KW-0217">Developmental protein</keyword>
<keyword id="KW-0221">Differentiation</keyword>
<keyword id="KW-0225">Disease variant</keyword>
<keyword id="KW-1015">Disulfide bond</keyword>
<keyword id="KW-0325">Glycoprotein</keyword>
<keyword id="KW-0472">Membrane</keyword>
<keyword id="KW-0675">Receptor</keyword>
<keyword id="KW-1185">Reference proteome</keyword>
<keyword id="KW-0677">Repeat</keyword>
<keyword id="KW-0732">Signal</keyword>
<keyword id="KW-0812">Transmembrane</keyword>
<keyword id="KW-1133">Transmembrane helix</keyword>
<organism>
    <name type="scientific">Mus musculus</name>
    <name type="common">Mouse</name>
    <dbReference type="NCBI Taxonomy" id="10090"/>
    <lineage>
        <taxon>Eukaryota</taxon>
        <taxon>Metazoa</taxon>
        <taxon>Chordata</taxon>
        <taxon>Craniata</taxon>
        <taxon>Vertebrata</taxon>
        <taxon>Euteleostomi</taxon>
        <taxon>Mammalia</taxon>
        <taxon>Eutheria</taxon>
        <taxon>Euarchontoglires</taxon>
        <taxon>Glires</taxon>
        <taxon>Rodentia</taxon>
        <taxon>Myomorpha</taxon>
        <taxon>Muroidea</taxon>
        <taxon>Muridae</taxon>
        <taxon>Murinae</taxon>
        <taxon>Mus</taxon>
        <taxon>Mus</taxon>
    </lineage>
</organism>